<sequence length="299" mass="32668">MERLVEKAEILMEALPFITKFRGKTFVIKYGGNAMAKADLKVAFAQDILMLKYIGINPVIVHGGGPQIGQMLKRMGLESKFVGGLRVTDRETMEVVEMVLGGLVNKSIVMLINRYAGGHIRAVGLTGKDGGLIRAKKLDAQEYFRQMGDFRPTELLDLGHVGEVEYIDTQILKHLEEDNYIPVIAPVGFDTEGNAYNINADFVASAVAGALKAEKVIFLTDIEGLKDEQGNTVSSINVERINRMIEEGVIKGGMIPKVKACIQALSQGVKKAHILDGRIPHCVLLEIFTSEGIGTEIVS</sequence>
<evidence type="ECO:0000255" key="1">
    <source>
        <dbReference type="HAMAP-Rule" id="MF_00082"/>
    </source>
</evidence>
<accession>C0QRI8</accession>
<gene>
    <name evidence="1" type="primary">argB</name>
    <name type="ordered locus">PERMA_1517</name>
</gene>
<dbReference type="EC" id="2.7.2.8" evidence="1"/>
<dbReference type="EMBL" id="CP001230">
    <property type="protein sequence ID" value="ACO04464.1"/>
    <property type="molecule type" value="Genomic_DNA"/>
</dbReference>
<dbReference type="RefSeq" id="WP_012676702.1">
    <property type="nucleotide sequence ID" value="NC_012440.1"/>
</dbReference>
<dbReference type="SMR" id="C0QRI8"/>
<dbReference type="STRING" id="123214.PERMA_1517"/>
<dbReference type="PaxDb" id="123214-PERMA_1517"/>
<dbReference type="KEGG" id="pmx:PERMA_1517"/>
<dbReference type="eggNOG" id="COG0548">
    <property type="taxonomic scope" value="Bacteria"/>
</dbReference>
<dbReference type="HOGENOM" id="CLU_053680_0_0_0"/>
<dbReference type="OrthoDB" id="9803155at2"/>
<dbReference type="UniPathway" id="UPA00068">
    <property type="reaction ID" value="UER00107"/>
</dbReference>
<dbReference type="Proteomes" id="UP000001366">
    <property type="component" value="Chromosome"/>
</dbReference>
<dbReference type="GO" id="GO:0005737">
    <property type="term" value="C:cytoplasm"/>
    <property type="evidence" value="ECO:0007669"/>
    <property type="project" value="UniProtKB-SubCell"/>
</dbReference>
<dbReference type="GO" id="GO:0003991">
    <property type="term" value="F:acetylglutamate kinase activity"/>
    <property type="evidence" value="ECO:0007669"/>
    <property type="project" value="UniProtKB-UniRule"/>
</dbReference>
<dbReference type="GO" id="GO:0005524">
    <property type="term" value="F:ATP binding"/>
    <property type="evidence" value="ECO:0007669"/>
    <property type="project" value="UniProtKB-UniRule"/>
</dbReference>
<dbReference type="GO" id="GO:0042450">
    <property type="term" value="P:arginine biosynthetic process via ornithine"/>
    <property type="evidence" value="ECO:0007669"/>
    <property type="project" value="UniProtKB-UniRule"/>
</dbReference>
<dbReference type="GO" id="GO:0006526">
    <property type="term" value="P:L-arginine biosynthetic process"/>
    <property type="evidence" value="ECO:0007669"/>
    <property type="project" value="UniProtKB-UniPathway"/>
</dbReference>
<dbReference type="CDD" id="cd04250">
    <property type="entry name" value="AAK_NAGK-C"/>
    <property type="match status" value="1"/>
</dbReference>
<dbReference type="FunFam" id="3.40.1160.10:FF:000004">
    <property type="entry name" value="Acetylglutamate kinase"/>
    <property type="match status" value="1"/>
</dbReference>
<dbReference type="Gene3D" id="3.40.1160.10">
    <property type="entry name" value="Acetylglutamate kinase-like"/>
    <property type="match status" value="1"/>
</dbReference>
<dbReference type="HAMAP" id="MF_00082">
    <property type="entry name" value="ArgB"/>
    <property type="match status" value="1"/>
</dbReference>
<dbReference type="InterPro" id="IPR036393">
    <property type="entry name" value="AceGlu_kinase-like_sf"/>
</dbReference>
<dbReference type="InterPro" id="IPR004662">
    <property type="entry name" value="AcgluKinase_fam"/>
</dbReference>
<dbReference type="InterPro" id="IPR037528">
    <property type="entry name" value="ArgB"/>
</dbReference>
<dbReference type="InterPro" id="IPR001048">
    <property type="entry name" value="Asp/Glu/Uridylate_kinase"/>
</dbReference>
<dbReference type="InterPro" id="IPR001057">
    <property type="entry name" value="Glu/AcGlu_kinase"/>
</dbReference>
<dbReference type="InterPro" id="IPR041727">
    <property type="entry name" value="NAGK-C"/>
</dbReference>
<dbReference type="NCBIfam" id="TIGR00761">
    <property type="entry name" value="argB"/>
    <property type="match status" value="1"/>
</dbReference>
<dbReference type="PANTHER" id="PTHR23342">
    <property type="entry name" value="N-ACETYLGLUTAMATE SYNTHASE"/>
    <property type="match status" value="1"/>
</dbReference>
<dbReference type="PANTHER" id="PTHR23342:SF0">
    <property type="entry name" value="N-ACETYLGLUTAMATE SYNTHASE, MITOCHONDRIAL"/>
    <property type="match status" value="1"/>
</dbReference>
<dbReference type="Pfam" id="PF00696">
    <property type="entry name" value="AA_kinase"/>
    <property type="match status" value="1"/>
</dbReference>
<dbReference type="PIRSF" id="PIRSF000728">
    <property type="entry name" value="NAGK"/>
    <property type="match status" value="1"/>
</dbReference>
<dbReference type="PRINTS" id="PR00474">
    <property type="entry name" value="GLU5KINASE"/>
</dbReference>
<dbReference type="SUPFAM" id="SSF53633">
    <property type="entry name" value="Carbamate kinase-like"/>
    <property type="match status" value="1"/>
</dbReference>
<reference key="1">
    <citation type="journal article" date="2009" name="J. Bacteriol.">
        <title>Complete and draft genome sequences of six members of the Aquificales.</title>
        <authorList>
            <person name="Reysenbach A.-L."/>
            <person name="Hamamura N."/>
            <person name="Podar M."/>
            <person name="Griffiths E."/>
            <person name="Ferreira S."/>
            <person name="Hochstein R."/>
            <person name="Heidelberg J."/>
            <person name="Johnson J."/>
            <person name="Mead D."/>
            <person name="Pohorille A."/>
            <person name="Sarmiento M."/>
            <person name="Schweighofer K."/>
            <person name="Seshadri R."/>
            <person name="Voytek M.A."/>
        </authorList>
    </citation>
    <scope>NUCLEOTIDE SEQUENCE [LARGE SCALE GENOMIC DNA]</scope>
    <source>
        <strain>DSM 14350 / EX-H1</strain>
    </source>
</reference>
<feature type="chain" id="PRO_1000118359" description="Acetylglutamate kinase">
    <location>
        <begin position="1"/>
        <end position="299"/>
    </location>
</feature>
<feature type="binding site" evidence="1">
    <location>
        <begin position="64"/>
        <end position="65"/>
    </location>
    <ligand>
        <name>substrate</name>
    </ligand>
</feature>
<feature type="binding site" evidence="1">
    <location>
        <position position="86"/>
    </location>
    <ligand>
        <name>substrate</name>
    </ligand>
</feature>
<feature type="binding site" evidence="1">
    <location>
        <position position="197"/>
    </location>
    <ligand>
        <name>substrate</name>
    </ligand>
</feature>
<feature type="site" description="Transition state stabilizer" evidence="1">
    <location>
        <position position="29"/>
    </location>
</feature>
<feature type="site" description="Transition state stabilizer" evidence="1">
    <location>
        <position position="257"/>
    </location>
</feature>
<organism>
    <name type="scientific">Persephonella marina (strain DSM 14350 / EX-H1)</name>
    <dbReference type="NCBI Taxonomy" id="123214"/>
    <lineage>
        <taxon>Bacteria</taxon>
        <taxon>Pseudomonadati</taxon>
        <taxon>Aquificota</taxon>
        <taxon>Aquificia</taxon>
        <taxon>Aquificales</taxon>
        <taxon>Hydrogenothermaceae</taxon>
        <taxon>Persephonella</taxon>
    </lineage>
</organism>
<comment type="function">
    <text evidence="1">Catalyzes the ATP-dependent phosphorylation of N-acetyl-L-glutamate.</text>
</comment>
<comment type="catalytic activity">
    <reaction evidence="1">
        <text>N-acetyl-L-glutamate + ATP = N-acetyl-L-glutamyl 5-phosphate + ADP</text>
        <dbReference type="Rhea" id="RHEA:14629"/>
        <dbReference type="ChEBI" id="CHEBI:30616"/>
        <dbReference type="ChEBI" id="CHEBI:44337"/>
        <dbReference type="ChEBI" id="CHEBI:57936"/>
        <dbReference type="ChEBI" id="CHEBI:456216"/>
        <dbReference type="EC" id="2.7.2.8"/>
    </reaction>
</comment>
<comment type="pathway">
    <text evidence="1">Amino-acid biosynthesis; L-arginine biosynthesis; N(2)-acetyl-L-ornithine from L-glutamate: step 2/4.</text>
</comment>
<comment type="subcellular location">
    <subcellularLocation>
        <location evidence="1">Cytoplasm</location>
    </subcellularLocation>
</comment>
<comment type="similarity">
    <text evidence="1">Belongs to the acetylglutamate kinase family. ArgB subfamily.</text>
</comment>
<protein>
    <recommendedName>
        <fullName evidence="1">Acetylglutamate kinase</fullName>
        <ecNumber evidence="1">2.7.2.8</ecNumber>
    </recommendedName>
    <alternativeName>
        <fullName evidence="1">N-acetyl-L-glutamate 5-phosphotransferase</fullName>
    </alternativeName>
    <alternativeName>
        <fullName evidence="1">NAG kinase</fullName>
        <shortName evidence="1">NAGK</shortName>
    </alternativeName>
</protein>
<proteinExistence type="inferred from homology"/>
<name>ARGB_PERMH</name>
<keyword id="KW-0028">Amino-acid biosynthesis</keyword>
<keyword id="KW-0055">Arginine biosynthesis</keyword>
<keyword id="KW-0067">ATP-binding</keyword>
<keyword id="KW-0963">Cytoplasm</keyword>
<keyword id="KW-0418">Kinase</keyword>
<keyword id="KW-0547">Nucleotide-binding</keyword>
<keyword id="KW-1185">Reference proteome</keyword>
<keyword id="KW-0808">Transferase</keyword>